<dbReference type="EC" id="2.1.1.242" evidence="1"/>
<dbReference type="EMBL" id="BX571859">
    <property type="protein sequence ID" value="CAE12418.1"/>
    <property type="molecule type" value="Genomic_DNA"/>
</dbReference>
<dbReference type="RefSeq" id="WP_011144529.1">
    <property type="nucleotide sequence ID" value="NC_005126.1"/>
</dbReference>
<dbReference type="SMR" id="Q7NA24"/>
<dbReference type="STRING" id="243265.plu0123"/>
<dbReference type="GeneID" id="48846425"/>
<dbReference type="KEGG" id="plu:plu0123"/>
<dbReference type="eggNOG" id="COG0742">
    <property type="taxonomic scope" value="Bacteria"/>
</dbReference>
<dbReference type="HOGENOM" id="CLU_076324_0_0_6"/>
<dbReference type="OrthoDB" id="3191794at2"/>
<dbReference type="Proteomes" id="UP000002514">
    <property type="component" value="Chromosome"/>
</dbReference>
<dbReference type="GO" id="GO:0005737">
    <property type="term" value="C:cytoplasm"/>
    <property type="evidence" value="ECO:0007669"/>
    <property type="project" value="UniProtKB-SubCell"/>
</dbReference>
<dbReference type="GO" id="GO:0008990">
    <property type="term" value="F:rRNA (guanine-N2-)-methyltransferase activity"/>
    <property type="evidence" value="ECO:0007669"/>
    <property type="project" value="UniProtKB-UniRule"/>
</dbReference>
<dbReference type="CDD" id="cd02440">
    <property type="entry name" value="AdoMet_MTases"/>
    <property type="match status" value="1"/>
</dbReference>
<dbReference type="Gene3D" id="3.40.50.150">
    <property type="entry name" value="Vaccinia Virus protein VP39"/>
    <property type="match status" value="1"/>
</dbReference>
<dbReference type="Gene3D" id="3.40.1630.10">
    <property type="entry name" value="YhiQ-like domain"/>
    <property type="match status" value="1"/>
</dbReference>
<dbReference type="HAMAP" id="MF_01523">
    <property type="entry name" value="16SrRNA_methyltr_J"/>
    <property type="match status" value="1"/>
</dbReference>
<dbReference type="InterPro" id="IPR007536">
    <property type="entry name" value="16SrRNA_methylTrfase_J"/>
</dbReference>
<dbReference type="InterPro" id="IPR029063">
    <property type="entry name" value="SAM-dependent_MTases_sf"/>
</dbReference>
<dbReference type="NCBIfam" id="NF008012">
    <property type="entry name" value="PRK10742.1"/>
    <property type="match status" value="1"/>
</dbReference>
<dbReference type="PANTHER" id="PTHR36112">
    <property type="entry name" value="RIBOSOMAL RNA SMALL SUBUNIT METHYLTRANSFERASE J"/>
    <property type="match status" value="1"/>
</dbReference>
<dbReference type="PANTHER" id="PTHR36112:SF1">
    <property type="entry name" value="RIBOSOMAL RNA SMALL SUBUNIT METHYLTRANSFERASE J"/>
    <property type="match status" value="1"/>
</dbReference>
<dbReference type="Pfam" id="PF04445">
    <property type="entry name" value="SAM_MT"/>
    <property type="match status" value="1"/>
</dbReference>
<dbReference type="SUPFAM" id="SSF53335">
    <property type="entry name" value="S-adenosyl-L-methionine-dependent methyltransferases"/>
    <property type="match status" value="1"/>
</dbReference>
<proteinExistence type="inferred from homology"/>
<keyword id="KW-0963">Cytoplasm</keyword>
<keyword id="KW-0489">Methyltransferase</keyword>
<keyword id="KW-1185">Reference proteome</keyword>
<keyword id="KW-0698">rRNA processing</keyword>
<keyword id="KW-0949">S-adenosyl-L-methionine</keyword>
<keyword id="KW-0808">Transferase</keyword>
<organism>
    <name type="scientific">Photorhabdus laumondii subsp. laumondii (strain DSM 15139 / CIP 105565 / TT01)</name>
    <name type="common">Photorhabdus luminescens subsp. laumondii</name>
    <dbReference type="NCBI Taxonomy" id="243265"/>
    <lineage>
        <taxon>Bacteria</taxon>
        <taxon>Pseudomonadati</taxon>
        <taxon>Pseudomonadota</taxon>
        <taxon>Gammaproteobacteria</taxon>
        <taxon>Enterobacterales</taxon>
        <taxon>Morganellaceae</taxon>
        <taxon>Photorhabdus</taxon>
    </lineage>
</organism>
<gene>
    <name evidence="1" type="primary">rsmJ</name>
    <name type="ordered locus">plu0123</name>
</gene>
<feature type="chain" id="PRO_0000212081" description="Ribosomal RNA small subunit methyltransferase J">
    <location>
        <begin position="1"/>
        <end position="247"/>
    </location>
</feature>
<feature type="binding site" evidence="1">
    <location>
        <begin position="101"/>
        <end position="102"/>
    </location>
    <ligand>
        <name>S-adenosyl-L-methionine</name>
        <dbReference type="ChEBI" id="CHEBI:59789"/>
    </ligand>
</feature>
<feature type="binding site" evidence="1">
    <location>
        <begin position="117"/>
        <end position="118"/>
    </location>
    <ligand>
        <name>S-adenosyl-L-methionine</name>
        <dbReference type="ChEBI" id="CHEBI:59789"/>
    </ligand>
</feature>
<feature type="binding site" evidence="1">
    <location>
        <begin position="153"/>
        <end position="154"/>
    </location>
    <ligand>
        <name>S-adenosyl-L-methionine</name>
        <dbReference type="ChEBI" id="CHEBI:59789"/>
    </ligand>
</feature>
<feature type="binding site" evidence="1">
    <location>
        <position position="171"/>
    </location>
    <ligand>
        <name>S-adenosyl-L-methionine</name>
        <dbReference type="ChEBI" id="CHEBI:59789"/>
    </ligand>
</feature>
<protein>
    <recommendedName>
        <fullName evidence="1">Ribosomal RNA small subunit methyltransferase J</fullName>
        <ecNumber evidence="1">2.1.1.242</ecNumber>
    </recommendedName>
    <alternativeName>
        <fullName evidence="1">16S rRNA m2G1516 methyltransferase</fullName>
    </alternativeName>
    <alternativeName>
        <fullName evidence="1">rRNA (guanine-N(2)-)-methyltransferase</fullName>
    </alternativeName>
</protein>
<comment type="function">
    <text evidence="1">Specifically methylates the guanosine in position 1516 of 16S rRNA.</text>
</comment>
<comment type="catalytic activity">
    <reaction evidence="1">
        <text>guanosine(1516) in 16S rRNA + S-adenosyl-L-methionine = N(2)-methylguanosine(1516) in 16S rRNA + S-adenosyl-L-homocysteine + H(+)</text>
        <dbReference type="Rhea" id="RHEA:43220"/>
        <dbReference type="Rhea" id="RHEA-COMP:10412"/>
        <dbReference type="Rhea" id="RHEA-COMP:10413"/>
        <dbReference type="ChEBI" id="CHEBI:15378"/>
        <dbReference type="ChEBI" id="CHEBI:57856"/>
        <dbReference type="ChEBI" id="CHEBI:59789"/>
        <dbReference type="ChEBI" id="CHEBI:74269"/>
        <dbReference type="ChEBI" id="CHEBI:74481"/>
        <dbReference type="EC" id="2.1.1.242"/>
    </reaction>
</comment>
<comment type="subcellular location">
    <subcellularLocation>
        <location evidence="1">Cytoplasm</location>
    </subcellularLocation>
</comment>
<comment type="similarity">
    <text evidence="1">Belongs to the methyltransferase superfamily. RsmJ family.</text>
</comment>
<evidence type="ECO:0000255" key="1">
    <source>
        <dbReference type="HAMAP-Rule" id="MF_01523"/>
    </source>
</evidence>
<sequence length="247" mass="27035">MGICLICEQGADNSALSQLAERWGLVHDENAIMALVLTPQHLELRKRDEPKLGGIYVDFVSGTMAHRRRFGGGRGEAVAKAIGIKKDYLPTIVDATAGLGRDAFVLASLGCHVRMLERHPVVAALLDDGLQRGYQDEEIGGWLQQRMTLLHASSITALADITPQPDVVYLDPMYPHKQKSALVKKEMRVFQSLVGADEDADSLLSPARVLAKRRVVVKRPDYAEPLAGVAASAAITTKNHRFDIYPC</sequence>
<reference key="1">
    <citation type="journal article" date="2003" name="Nat. Biotechnol.">
        <title>The genome sequence of the entomopathogenic bacterium Photorhabdus luminescens.</title>
        <authorList>
            <person name="Duchaud E."/>
            <person name="Rusniok C."/>
            <person name="Frangeul L."/>
            <person name="Buchrieser C."/>
            <person name="Givaudan A."/>
            <person name="Taourit S."/>
            <person name="Bocs S."/>
            <person name="Boursaux-Eude C."/>
            <person name="Chandler M."/>
            <person name="Charles J.-F."/>
            <person name="Dassa E."/>
            <person name="Derose R."/>
            <person name="Derzelle S."/>
            <person name="Freyssinet G."/>
            <person name="Gaudriault S."/>
            <person name="Medigue C."/>
            <person name="Lanois A."/>
            <person name="Powell K."/>
            <person name="Siguier P."/>
            <person name="Vincent R."/>
            <person name="Wingate V."/>
            <person name="Zouine M."/>
            <person name="Glaser P."/>
            <person name="Boemare N."/>
            <person name="Danchin A."/>
            <person name="Kunst F."/>
        </authorList>
    </citation>
    <scope>NUCLEOTIDE SEQUENCE [LARGE SCALE GENOMIC DNA]</scope>
    <source>
        <strain>DSM 15139 / CIP 105565 / TT01</strain>
    </source>
</reference>
<name>RSMJ_PHOLL</name>
<accession>Q7NA24</accession>